<dbReference type="EC" id="4.3.2.1" evidence="1"/>
<dbReference type="EMBL" id="AP006627">
    <property type="protein sequence ID" value="BAD64022.1"/>
    <property type="molecule type" value="Genomic_DNA"/>
</dbReference>
<dbReference type="SMR" id="Q5WHY3"/>
<dbReference type="STRING" id="66692.ABC1487"/>
<dbReference type="KEGG" id="bcl:ABC1487"/>
<dbReference type="eggNOG" id="COG0165">
    <property type="taxonomic scope" value="Bacteria"/>
</dbReference>
<dbReference type="HOGENOM" id="CLU_027272_2_3_9"/>
<dbReference type="OrthoDB" id="9769623at2"/>
<dbReference type="UniPathway" id="UPA00068">
    <property type="reaction ID" value="UER00114"/>
</dbReference>
<dbReference type="Proteomes" id="UP000001168">
    <property type="component" value="Chromosome"/>
</dbReference>
<dbReference type="GO" id="GO:0005829">
    <property type="term" value="C:cytosol"/>
    <property type="evidence" value="ECO:0007669"/>
    <property type="project" value="TreeGrafter"/>
</dbReference>
<dbReference type="GO" id="GO:0004056">
    <property type="term" value="F:argininosuccinate lyase activity"/>
    <property type="evidence" value="ECO:0007669"/>
    <property type="project" value="UniProtKB-UniRule"/>
</dbReference>
<dbReference type="GO" id="GO:0042450">
    <property type="term" value="P:arginine biosynthetic process via ornithine"/>
    <property type="evidence" value="ECO:0007669"/>
    <property type="project" value="InterPro"/>
</dbReference>
<dbReference type="GO" id="GO:0006526">
    <property type="term" value="P:L-arginine biosynthetic process"/>
    <property type="evidence" value="ECO:0007669"/>
    <property type="project" value="UniProtKB-UniRule"/>
</dbReference>
<dbReference type="CDD" id="cd01359">
    <property type="entry name" value="Argininosuccinate_lyase"/>
    <property type="match status" value="1"/>
</dbReference>
<dbReference type="Gene3D" id="1.10.40.30">
    <property type="entry name" value="Fumarase/aspartase (C-terminal domain)"/>
    <property type="match status" value="1"/>
</dbReference>
<dbReference type="Gene3D" id="1.20.200.10">
    <property type="entry name" value="Fumarase/aspartase (Central domain)"/>
    <property type="match status" value="1"/>
</dbReference>
<dbReference type="Gene3D" id="1.10.275.10">
    <property type="entry name" value="Fumarase/aspartase (N-terminal domain)"/>
    <property type="match status" value="1"/>
</dbReference>
<dbReference type="HAMAP" id="MF_00006">
    <property type="entry name" value="Arg_succ_lyase"/>
    <property type="match status" value="1"/>
</dbReference>
<dbReference type="InterPro" id="IPR029419">
    <property type="entry name" value="Arg_succ_lyase_C"/>
</dbReference>
<dbReference type="InterPro" id="IPR009049">
    <property type="entry name" value="Argininosuccinate_lyase"/>
</dbReference>
<dbReference type="InterPro" id="IPR024083">
    <property type="entry name" value="Fumarase/histidase_N"/>
</dbReference>
<dbReference type="InterPro" id="IPR000362">
    <property type="entry name" value="Fumarate_lyase_fam"/>
</dbReference>
<dbReference type="InterPro" id="IPR022761">
    <property type="entry name" value="Fumarate_lyase_N"/>
</dbReference>
<dbReference type="InterPro" id="IPR008948">
    <property type="entry name" value="L-Aspartase-like"/>
</dbReference>
<dbReference type="NCBIfam" id="TIGR00838">
    <property type="entry name" value="argH"/>
    <property type="match status" value="1"/>
</dbReference>
<dbReference type="PANTHER" id="PTHR43814">
    <property type="entry name" value="ARGININOSUCCINATE LYASE"/>
    <property type="match status" value="1"/>
</dbReference>
<dbReference type="PANTHER" id="PTHR43814:SF1">
    <property type="entry name" value="ARGININOSUCCINATE LYASE"/>
    <property type="match status" value="1"/>
</dbReference>
<dbReference type="Pfam" id="PF14698">
    <property type="entry name" value="ASL_C2"/>
    <property type="match status" value="1"/>
</dbReference>
<dbReference type="Pfam" id="PF00206">
    <property type="entry name" value="Lyase_1"/>
    <property type="match status" value="1"/>
</dbReference>
<dbReference type="PRINTS" id="PR00145">
    <property type="entry name" value="ARGSUCLYASE"/>
</dbReference>
<dbReference type="PRINTS" id="PR00149">
    <property type="entry name" value="FUMRATELYASE"/>
</dbReference>
<dbReference type="SUPFAM" id="SSF48557">
    <property type="entry name" value="L-aspartase-like"/>
    <property type="match status" value="1"/>
</dbReference>
<comment type="catalytic activity">
    <reaction evidence="1">
        <text>2-(N(omega)-L-arginino)succinate = fumarate + L-arginine</text>
        <dbReference type="Rhea" id="RHEA:24020"/>
        <dbReference type="ChEBI" id="CHEBI:29806"/>
        <dbReference type="ChEBI" id="CHEBI:32682"/>
        <dbReference type="ChEBI" id="CHEBI:57472"/>
        <dbReference type="EC" id="4.3.2.1"/>
    </reaction>
</comment>
<comment type="pathway">
    <text evidence="1">Amino-acid biosynthesis; L-arginine biosynthesis; L-arginine from L-ornithine and carbamoyl phosphate: step 3/3.</text>
</comment>
<comment type="subcellular location">
    <subcellularLocation>
        <location evidence="1">Cytoplasm</location>
    </subcellularLocation>
</comment>
<comment type="similarity">
    <text evidence="1">Belongs to the lyase 1 family. Argininosuccinate lyase subfamily.</text>
</comment>
<name>ARLY1_SHOC1</name>
<reference key="1">
    <citation type="submission" date="2003-10" db="EMBL/GenBank/DDBJ databases">
        <title>The complete genome sequence of the alkaliphilic Bacillus clausii KSM-K16.</title>
        <authorList>
            <person name="Takaki Y."/>
            <person name="Kageyama Y."/>
            <person name="Shimamura S."/>
            <person name="Suzuki H."/>
            <person name="Nishi S."/>
            <person name="Hatada Y."/>
            <person name="Kawai S."/>
            <person name="Ito S."/>
            <person name="Horikoshi K."/>
        </authorList>
    </citation>
    <scope>NUCLEOTIDE SEQUENCE [LARGE SCALE GENOMIC DNA]</scope>
    <source>
        <strain>KSM-K16</strain>
    </source>
</reference>
<feature type="chain" id="PRO_0000240712" description="Argininosuccinate lyase 1">
    <location>
        <begin position="1"/>
        <end position="498"/>
    </location>
</feature>
<sequence length="498" mass="55866">MVGRLKESPSQEMIDLLFKPSIRSDLKHHYSYLLKINSVHLFMLKSEGIISDEAASKIHSVLTHLQVTGKEALSINPALEDLYFNVEAYIIEQTGPEIGGQMHTGRSRNDILATVTRMRIREEMLEIYELVCTLRRTLIDLATEHTSTLMTGYTHLQPAEPITFAHYLSALLHGFERDFTRLYNCYAHINKSPLGSCALASTTFSINRKFTMELLGFADLLENSLDGIASRDYALEALSALSIFSNSLSRFAQDLYTWCSYEFGYLEVGHSVAVISSIMPQKKNPVTLEHIKAKAGHIQGALVSSLSVLKNTLYSHSRDTSMESMKYTWEAINETKAAIRLMIKTLQTLTVHKDNMAATTRQNFSTVTELANALVRHYHFSFRTAHHIVAEIVNETLNQGLGSDKIEASTVERAIKQVTAKTVSVTKEFVEQALDPERNISLRTVRGGSAPVEVARQLQQLEQTLASDHQKISDLKQALQSADQLYKHYAAELERGAQ</sequence>
<organism>
    <name type="scientific">Shouchella clausii (strain KSM-K16)</name>
    <name type="common">Alkalihalobacillus clausii</name>
    <dbReference type="NCBI Taxonomy" id="66692"/>
    <lineage>
        <taxon>Bacteria</taxon>
        <taxon>Bacillati</taxon>
        <taxon>Bacillota</taxon>
        <taxon>Bacilli</taxon>
        <taxon>Bacillales</taxon>
        <taxon>Bacillaceae</taxon>
        <taxon>Shouchella</taxon>
    </lineage>
</organism>
<protein>
    <recommendedName>
        <fullName evidence="1">Argininosuccinate lyase 1</fullName>
        <shortName evidence="1">ASAL 1</shortName>
        <ecNumber evidence="1">4.3.2.1</ecNumber>
    </recommendedName>
    <alternativeName>
        <fullName evidence="1">Arginosuccinase 1</fullName>
    </alternativeName>
</protein>
<keyword id="KW-0028">Amino-acid biosynthesis</keyword>
<keyword id="KW-0055">Arginine biosynthesis</keyword>
<keyword id="KW-0963">Cytoplasm</keyword>
<keyword id="KW-0456">Lyase</keyword>
<keyword id="KW-1185">Reference proteome</keyword>
<proteinExistence type="inferred from homology"/>
<evidence type="ECO:0000255" key="1">
    <source>
        <dbReference type="HAMAP-Rule" id="MF_00006"/>
    </source>
</evidence>
<gene>
    <name evidence="1" type="primary">argH1</name>
    <name type="ordered locus">ABC1487</name>
</gene>
<accession>Q5WHY3</accession>